<keyword id="KW-0028">Amino-acid biosynthesis</keyword>
<keyword id="KW-0055">Arginine biosynthesis</keyword>
<keyword id="KW-0067">ATP-binding</keyword>
<keyword id="KW-0963">Cytoplasm</keyword>
<keyword id="KW-0436">Ligase</keyword>
<keyword id="KW-0547">Nucleotide-binding</keyword>
<evidence type="ECO:0000255" key="1">
    <source>
        <dbReference type="HAMAP-Rule" id="MF_00005"/>
    </source>
</evidence>
<dbReference type="EC" id="6.3.4.5" evidence="1"/>
<dbReference type="EMBL" id="AP009180">
    <property type="protein sequence ID" value="BAF35135.1"/>
    <property type="molecule type" value="Genomic_DNA"/>
</dbReference>
<dbReference type="RefSeq" id="WP_011672327.1">
    <property type="nucleotide sequence ID" value="NC_008512.1"/>
</dbReference>
<dbReference type="SMR" id="Q05FN6"/>
<dbReference type="STRING" id="387662.CRP_104"/>
<dbReference type="KEGG" id="crp:CRP_104"/>
<dbReference type="HOGENOM" id="CLU_032784_4_2_6"/>
<dbReference type="OrthoDB" id="9801641at2"/>
<dbReference type="UniPathway" id="UPA00068">
    <property type="reaction ID" value="UER00113"/>
</dbReference>
<dbReference type="Proteomes" id="UP000000777">
    <property type="component" value="Chromosome"/>
</dbReference>
<dbReference type="GO" id="GO:0005737">
    <property type="term" value="C:cytoplasm"/>
    <property type="evidence" value="ECO:0007669"/>
    <property type="project" value="UniProtKB-SubCell"/>
</dbReference>
<dbReference type="GO" id="GO:0004055">
    <property type="term" value="F:argininosuccinate synthase activity"/>
    <property type="evidence" value="ECO:0007669"/>
    <property type="project" value="UniProtKB-UniRule"/>
</dbReference>
<dbReference type="GO" id="GO:0005524">
    <property type="term" value="F:ATP binding"/>
    <property type="evidence" value="ECO:0007669"/>
    <property type="project" value="UniProtKB-UniRule"/>
</dbReference>
<dbReference type="GO" id="GO:0000053">
    <property type="term" value="P:argininosuccinate metabolic process"/>
    <property type="evidence" value="ECO:0007669"/>
    <property type="project" value="TreeGrafter"/>
</dbReference>
<dbReference type="GO" id="GO:0006526">
    <property type="term" value="P:L-arginine biosynthetic process"/>
    <property type="evidence" value="ECO:0007669"/>
    <property type="project" value="UniProtKB-UniRule"/>
</dbReference>
<dbReference type="GO" id="GO:0000050">
    <property type="term" value="P:urea cycle"/>
    <property type="evidence" value="ECO:0007669"/>
    <property type="project" value="TreeGrafter"/>
</dbReference>
<dbReference type="CDD" id="cd01999">
    <property type="entry name" value="ASS"/>
    <property type="match status" value="1"/>
</dbReference>
<dbReference type="FunFam" id="3.40.50.620:FF:000019">
    <property type="entry name" value="Argininosuccinate synthase"/>
    <property type="match status" value="1"/>
</dbReference>
<dbReference type="FunFam" id="3.90.1260.10:FF:000007">
    <property type="entry name" value="Argininosuccinate synthase"/>
    <property type="match status" value="1"/>
</dbReference>
<dbReference type="Gene3D" id="3.90.1260.10">
    <property type="entry name" value="Argininosuccinate synthetase, chain A, domain 2"/>
    <property type="match status" value="1"/>
</dbReference>
<dbReference type="Gene3D" id="3.40.50.620">
    <property type="entry name" value="HUPs"/>
    <property type="match status" value="1"/>
</dbReference>
<dbReference type="Gene3D" id="1.20.5.470">
    <property type="entry name" value="Single helix bin"/>
    <property type="match status" value="1"/>
</dbReference>
<dbReference type="HAMAP" id="MF_00005">
    <property type="entry name" value="Arg_succ_synth_type1"/>
    <property type="match status" value="1"/>
</dbReference>
<dbReference type="InterPro" id="IPR048268">
    <property type="entry name" value="Arginosuc_syn_C"/>
</dbReference>
<dbReference type="InterPro" id="IPR048267">
    <property type="entry name" value="Arginosuc_syn_N"/>
</dbReference>
<dbReference type="InterPro" id="IPR001518">
    <property type="entry name" value="Arginosuc_synth"/>
</dbReference>
<dbReference type="InterPro" id="IPR018223">
    <property type="entry name" value="Arginosuc_synth_CS"/>
</dbReference>
<dbReference type="InterPro" id="IPR023434">
    <property type="entry name" value="Arginosuc_synth_type_1_subfam"/>
</dbReference>
<dbReference type="InterPro" id="IPR024074">
    <property type="entry name" value="AS_cat/multimer_dom_body"/>
</dbReference>
<dbReference type="InterPro" id="IPR014729">
    <property type="entry name" value="Rossmann-like_a/b/a_fold"/>
</dbReference>
<dbReference type="NCBIfam" id="TIGR00032">
    <property type="entry name" value="argG"/>
    <property type="match status" value="1"/>
</dbReference>
<dbReference type="NCBIfam" id="NF001770">
    <property type="entry name" value="PRK00509.1"/>
    <property type="match status" value="1"/>
</dbReference>
<dbReference type="PANTHER" id="PTHR11587">
    <property type="entry name" value="ARGININOSUCCINATE SYNTHASE"/>
    <property type="match status" value="1"/>
</dbReference>
<dbReference type="PANTHER" id="PTHR11587:SF2">
    <property type="entry name" value="ARGININOSUCCINATE SYNTHASE"/>
    <property type="match status" value="1"/>
</dbReference>
<dbReference type="Pfam" id="PF20979">
    <property type="entry name" value="Arginosuc_syn_C"/>
    <property type="match status" value="1"/>
</dbReference>
<dbReference type="Pfam" id="PF00764">
    <property type="entry name" value="Arginosuc_synth"/>
    <property type="match status" value="1"/>
</dbReference>
<dbReference type="SUPFAM" id="SSF52402">
    <property type="entry name" value="Adenine nucleotide alpha hydrolases-like"/>
    <property type="match status" value="1"/>
</dbReference>
<dbReference type="SUPFAM" id="SSF69864">
    <property type="entry name" value="Argininosuccinate synthetase, C-terminal domain"/>
    <property type="match status" value="1"/>
</dbReference>
<dbReference type="PROSITE" id="PS00564">
    <property type="entry name" value="ARGININOSUCCIN_SYN_1"/>
    <property type="match status" value="1"/>
</dbReference>
<dbReference type="PROSITE" id="PS00565">
    <property type="entry name" value="ARGININOSUCCIN_SYN_2"/>
    <property type="match status" value="1"/>
</dbReference>
<organism>
    <name type="scientific">Carsonella ruddii (strain PV)</name>
    <dbReference type="NCBI Taxonomy" id="387662"/>
    <lineage>
        <taxon>Bacteria</taxon>
        <taxon>Pseudomonadati</taxon>
        <taxon>Pseudomonadota</taxon>
        <taxon>Gammaproteobacteria</taxon>
        <taxon>Oceanospirillales</taxon>
        <taxon>Halomonadaceae</taxon>
        <taxon>Zymobacter group</taxon>
        <taxon>Candidatus Carsonella</taxon>
    </lineage>
</organism>
<feature type="chain" id="PRO_1000000390" description="Argininosuccinate synthase">
    <location>
        <begin position="1"/>
        <end position="393"/>
    </location>
</feature>
<feature type="binding site" evidence="1">
    <location>
        <begin position="10"/>
        <end position="18"/>
    </location>
    <ligand>
        <name>ATP</name>
        <dbReference type="ChEBI" id="CHEBI:30616"/>
    </ligand>
</feature>
<feature type="binding site" evidence="1">
    <location>
        <position position="37"/>
    </location>
    <ligand>
        <name>ATP</name>
        <dbReference type="ChEBI" id="CHEBI:30616"/>
    </ligand>
</feature>
<feature type="binding site" evidence="1">
    <location>
        <position position="88"/>
    </location>
    <ligand>
        <name>L-citrulline</name>
        <dbReference type="ChEBI" id="CHEBI:57743"/>
    </ligand>
</feature>
<feature type="binding site" evidence="1">
    <location>
        <position position="118"/>
    </location>
    <ligand>
        <name>ATP</name>
        <dbReference type="ChEBI" id="CHEBI:30616"/>
    </ligand>
</feature>
<feature type="binding site" evidence="1">
    <location>
        <position position="120"/>
    </location>
    <ligand>
        <name>L-aspartate</name>
        <dbReference type="ChEBI" id="CHEBI:29991"/>
    </ligand>
</feature>
<feature type="binding site" evidence="1">
    <location>
        <position position="124"/>
    </location>
    <ligand>
        <name>L-aspartate</name>
        <dbReference type="ChEBI" id="CHEBI:29991"/>
    </ligand>
</feature>
<feature type="binding site" evidence="1">
    <location>
        <position position="124"/>
    </location>
    <ligand>
        <name>L-citrulline</name>
        <dbReference type="ChEBI" id="CHEBI:57743"/>
    </ligand>
</feature>
<feature type="binding site" evidence="1">
    <location>
        <position position="125"/>
    </location>
    <ligand>
        <name>L-aspartate</name>
        <dbReference type="ChEBI" id="CHEBI:29991"/>
    </ligand>
</feature>
<feature type="binding site" evidence="1">
    <location>
        <position position="128"/>
    </location>
    <ligand>
        <name>L-citrulline</name>
        <dbReference type="ChEBI" id="CHEBI:57743"/>
    </ligand>
</feature>
<feature type="binding site" evidence="1">
    <location>
        <position position="176"/>
    </location>
    <ligand>
        <name>L-citrulline</name>
        <dbReference type="ChEBI" id="CHEBI:57743"/>
    </ligand>
</feature>
<feature type="binding site" evidence="1">
    <location>
        <position position="185"/>
    </location>
    <ligand>
        <name>L-citrulline</name>
        <dbReference type="ChEBI" id="CHEBI:57743"/>
    </ligand>
</feature>
<feature type="binding site" evidence="1">
    <location>
        <position position="261"/>
    </location>
    <ligand>
        <name>L-citrulline</name>
        <dbReference type="ChEBI" id="CHEBI:57743"/>
    </ligand>
</feature>
<feature type="binding site" evidence="1">
    <location>
        <position position="273"/>
    </location>
    <ligand>
        <name>L-citrulline</name>
        <dbReference type="ChEBI" id="CHEBI:57743"/>
    </ligand>
</feature>
<reference key="1">
    <citation type="journal article" date="2006" name="Science">
        <title>The 160-kilobase genome of the bacterial endosymbiont Carsonella.</title>
        <authorList>
            <person name="Nakabachi A."/>
            <person name="Yamashita A."/>
            <person name="Toh H."/>
            <person name="Ishikawa H."/>
            <person name="Dunbar H.E."/>
            <person name="Moran N.A."/>
            <person name="Hattori M."/>
        </authorList>
    </citation>
    <scope>NUCLEOTIDE SEQUENCE [LARGE SCALE GENOMIC DNA]</scope>
    <source>
        <strain>PV</strain>
    </source>
</reference>
<proteinExistence type="inferred from homology"/>
<name>ASSY_CARRP</name>
<protein>
    <recommendedName>
        <fullName evidence="1">Argininosuccinate synthase</fullName>
        <ecNumber evidence="1">6.3.4.5</ecNumber>
    </recommendedName>
    <alternativeName>
        <fullName evidence="1">Citrulline--aspartate ligase</fullName>
    </alternativeName>
</protein>
<accession>Q05FN6</accession>
<gene>
    <name evidence="1" type="primary">argG</name>
    <name type="ordered locus">CRP_104</name>
</gene>
<comment type="catalytic activity">
    <reaction evidence="1">
        <text>L-citrulline + L-aspartate + ATP = 2-(N(omega)-L-arginino)succinate + AMP + diphosphate + H(+)</text>
        <dbReference type="Rhea" id="RHEA:10932"/>
        <dbReference type="ChEBI" id="CHEBI:15378"/>
        <dbReference type="ChEBI" id="CHEBI:29991"/>
        <dbReference type="ChEBI" id="CHEBI:30616"/>
        <dbReference type="ChEBI" id="CHEBI:33019"/>
        <dbReference type="ChEBI" id="CHEBI:57472"/>
        <dbReference type="ChEBI" id="CHEBI:57743"/>
        <dbReference type="ChEBI" id="CHEBI:456215"/>
        <dbReference type="EC" id="6.3.4.5"/>
    </reaction>
</comment>
<comment type="pathway">
    <text evidence="1">Amino-acid biosynthesis; L-arginine biosynthesis; L-arginine from L-ornithine and carbamoyl phosphate: step 2/3.</text>
</comment>
<comment type="subunit">
    <text evidence="1">Homotetramer.</text>
</comment>
<comment type="subcellular location">
    <subcellularLocation>
        <location evidence="1">Cytoplasm</location>
    </subcellularLocation>
</comment>
<comment type="similarity">
    <text evidence="1">Belongs to the argininosuccinate synthase family. Type 1 subfamily.</text>
</comment>
<sequence>MKIKEKIVLAYSGGLDTSVIVKWLQNELNFEVITFTADLGQGEEILLAKKKAKLLNIKNIFVKNLKKEFIKNFVFPFLRSSSTYENNYLLGTAIARPLIVKELMKISYYLNTNYVSHGATGKGNDQIRFELGFKYFNPKIKIIAPWRIWNLNSRNSLLNFCIKNNIKFDSKTKKYSIDKNLFHNSYEGGNLDNINYEPDEPMWEHTLSNYNSLDYPIYISLTFKNGDPIKINNKNYNVEELFLKLNNLGSIAGIGRLDIIENRLIGIKSRGCYESPGASIIMYARKKLESLILDKEIYSFKEEIALKYSKLVYNGYWWSPERILLQKIIDYTQTSINGIIKLKIFKGQINIASINSINSLFNSKNSSFDEISNLFNQSDSSGFINIKSLRLII</sequence>